<keyword id="KW-0004">4Fe-4S</keyword>
<keyword id="KW-0028">Amino-acid biosynthesis</keyword>
<keyword id="KW-0100">Branched-chain amino acid biosynthesis</keyword>
<keyword id="KW-0408">Iron</keyword>
<keyword id="KW-0411">Iron-sulfur</keyword>
<keyword id="KW-0432">Leucine biosynthesis</keyword>
<keyword id="KW-0456">Lyase</keyword>
<keyword id="KW-0479">Metal-binding</keyword>
<keyword id="KW-1185">Reference proteome</keyword>
<sequence>MSAKTLYDKLWESHVVHTEQDGGVLLYIDRQLLHEVTSPQAFSGLRAAGRKAWRIDANIATADHNVPTTDRAAGIADATSRLQVDTLDRNCAEFGIEEFGMHDKRQGIVHVIAPEQGLTLPGMTVVCGDSHTATHGALGALAFGIGTTEVEHVLATQCLWARKSRSMRIWVEGELGNGVTAKDLVLAIIGRIGTAGGTGYAIEFAGPAVHALSVEGRMTLCNMAIEAGARSGMVGVDAVTIDYLRGRPYAPVGKIWDQAVAVWGELHSDPDAQFDAEIRLEATDVAPQVTWGTSPEMVVDISARVPDPALEKDPVRRKGWSDALAYMDLAAATPISSIALDKVFIGSCTNARIEDLRAAAAVARGHHKAASVKAVLVVPGSGLVKAQAEAEGLDRIFRDAGFEWREPGCSMCLAMNADRLEPGERCASTSNRNFEGRQGAGGRTHLVSPAMAAAAAIAGHFVDVRDWIMH</sequence>
<reference key="1">
    <citation type="journal article" date="2008" name="BMC Genomics">
        <title>Acidithiobacillus ferrooxidans metabolism: from genome sequence to industrial applications.</title>
        <authorList>
            <person name="Valdes J."/>
            <person name="Pedroso I."/>
            <person name="Quatrini R."/>
            <person name="Dodson R.J."/>
            <person name="Tettelin H."/>
            <person name="Blake R. II"/>
            <person name="Eisen J.A."/>
            <person name="Holmes D.S."/>
        </authorList>
    </citation>
    <scope>NUCLEOTIDE SEQUENCE [LARGE SCALE GENOMIC DNA]</scope>
    <source>
        <strain>ATCC 23270 / DSM 14882 / CIP 104768 / NCIMB 8455</strain>
    </source>
</reference>
<accession>B7J5E0</accession>
<protein>
    <recommendedName>
        <fullName evidence="1">3-isopropylmalate dehydratase large subunit</fullName>
        <ecNumber evidence="1">4.2.1.33</ecNumber>
    </recommendedName>
    <alternativeName>
        <fullName evidence="1">Alpha-IPM isomerase</fullName>
        <shortName evidence="1">IPMI</shortName>
    </alternativeName>
    <alternativeName>
        <fullName evidence="1">Isopropylmalate isomerase</fullName>
    </alternativeName>
</protein>
<feature type="chain" id="PRO_1000135657" description="3-isopropylmalate dehydratase large subunit">
    <location>
        <begin position="1"/>
        <end position="470"/>
    </location>
</feature>
<feature type="binding site" evidence="1">
    <location>
        <position position="348"/>
    </location>
    <ligand>
        <name>[4Fe-4S] cluster</name>
        <dbReference type="ChEBI" id="CHEBI:49883"/>
    </ligand>
</feature>
<feature type="binding site" evidence="1">
    <location>
        <position position="409"/>
    </location>
    <ligand>
        <name>[4Fe-4S] cluster</name>
        <dbReference type="ChEBI" id="CHEBI:49883"/>
    </ligand>
</feature>
<feature type="binding site" evidence="1">
    <location>
        <position position="412"/>
    </location>
    <ligand>
        <name>[4Fe-4S] cluster</name>
        <dbReference type="ChEBI" id="CHEBI:49883"/>
    </ligand>
</feature>
<gene>
    <name evidence="1" type="primary">leuC</name>
    <name type="ordered locus">AFE_0624</name>
</gene>
<organism>
    <name type="scientific">Acidithiobacillus ferrooxidans (strain ATCC 23270 / DSM 14882 / CIP 104768 / NCIMB 8455)</name>
    <name type="common">Ferrobacillus ferrooxidans (strain ATCC 23270)</name>
    <dbReference type="NCBI Taxonomy" id="243159"/>
    <lineage>
        <taxon>Bacteria</taxon>
        <taxon>Pseudomonadati</taxon>
        <taxon>Pseudomonadota</taxon>
        <taxon>Acidithiobacillia</taxon>
        <taxon>Acidithiobacillales</taxon>
        <taxon>Acidithiobacillaceae</taxon>
        <taxon>Acidithiobacillus</taxon>
    </lineage>
</organism>
<comment type="function">
    <text evidence="1">Catalyzes the isomerization between 2-isopropylmalate and 3-isopropylmalate, via the formation of 2-isopropylmaleate.</text>
</comment>
<comment type="catalytic activity">
    <reaction evidence="1">
        <text>(2R,3S)-3-isopropylmalate = (2S)-2-isopropylmalate</text>
        <dbReference type="Rhea" id="RHEA:32287"/>
        <dbReference type="ChEBI" id="CHEBI:1178"/>
        <dbReference type="ChEBI" id="CHEBI:35121"/>
        <dbReference type="EC" id="4.2.1.33"/>
    </reaction>
</comment>
<comment type="cofactor">
    <cofactor evidence="1">
        <name>[4Fe-4S] cluster</name>
        <dbReference type="ChEBI" id="CHEBI:49883"/>
    </cofactor>
    <text evidence="1">Binds 1 [4Fe-4S] cluster per subunit.</text>
</comment>
<comment type="pathway">
    <text evidence="1">Amino-acid biosynthesis; L-leucine biosynthesis; L-leucine from 3-methyl-2-oxobutanoate: step 2/4.</text>
</comment>
<comment type="subunit">
    <text evidence="1">Heterodimer of LeuC and LeuD.</text>
</comment>
<comment type="similarity">
    <text evidence="1">Belongs to the aconitase/IPM isomerase family. LeuC type 1 subfamily.</text>
</comment>
<dbReference type="EC" id="4.2.1.33" evidence="1"/>
<dbReference type="EMBL" id="CP001219">
    <property type="protein sequence ID" value="ACK79183.1"/>
    <property type="molecule type" value="Genomic_DNA"/>
</dbReference>
<dbReference type="RefSeq" id="WP_012536243.1">
    <property type="nucleotide sequence ID" value="NC_011761.1"/>
</dbReference>
<dbReference type="SMR" id="B7J5E0"/>
<dbReference type="STRING" id="243159.AFE_0624"/>
<dbReference type="PaxDb" id="243159-AFE_0624"/>
<dbReference type="GeneID" id="65279976"/>
<dbReference type="KEGG" id="afr:AFE_0624"/>
<dbReference type="eggNOG" id="COG0065">
    <property type="taxonomic scope" value="Bacteria"/>
</dbReference>
<dbReference type="HOGENOM" id="CLU_006714_3_4_6"/>
<dbReference type="UniPathway" id="UPA00048">
    <property type="reaction ID" value="UER00071"/>
</dbReference>
<dbReference type="Proteomes" id="UP000001362">
    <property type="component" value="Chromosome"/>
</dbReference>
<dbReference type="GO" id="GO:0003861">
    <property type="term" value="F:3-isopropylmalate dehydratase activity"/>
    <property type="evidence" value="ECO:0007669"/>
    <property type="project" value="UniProtKB-UniRule"/>
</dbReference>
<dbReference type="GO" id="GO:0051539">
    <property type="term" value="F:4 iron, 4 sulfur cluster binding"/>
    <property type="evidence" value="ECO:0007669"/>
    <property type="project" value="UniProtKB-KW"/>
</dbReference>
<dbReference type="GO" id="GO:0046872">
    <property type="term" value="F:metal ion binding"/>
    <property type="evidence" value="ECO:0007669"/>
    <property type="project" value="UniProtKB-KW"/>
</dbReference>
<dbReference type="GO" id="GO:0009098">
    <property type="term" value="P:L-leucine biosynthetic process"/>
    <property type="evidence" value="ECO:0007669"/>
    <property type="project" value="UniProtKB-UniRule"/>
</dbReference>
<dbReference type="CDD" id="cd01583">
    <property type="entry name" value="IPMI"/>
    <property type="match status" value="1"/>
</dbReference>
<dbReference type="FunFam" id="3.30.499.10:FF:000007">
    <property type="entry name" value="3-isopropylmalate dehydratase large subunit"/>
    <property type="match status" value="1"/>
</dbReference>
<dbReference type="Gene3D" id="3.30.499.10">
    <property type="entry name" value="Aconitase, domain 3"/>
    <property type="match status" value="2"/>
</dbReference>
<dbReference type="HAMAP" id="MF_01026">
    <property type="entry name" value="LeuC_type1"/>
    <property type="match status" value="1"/>
</dbReference>
<dbReference type="InterPro" id="IPR004430">
    <property type="entry name" value="3-IsopropMal_deHydase_lsu"/>
</dbReference>
<dbReference type="InterPro" id="IPR015931">
    <property type="entry name" value="Acnase/IPM_dHydase_lsu_aba_1/3"/>
</dbReference>
<dbReference type="InterPro" id="IPR001030">
    <property type="entry name" value="Acoase/IPM_deHydtase_lsu_aba"/>
</dbReference>
<dbReference type="InterPro" id="IPR018136">
    <property type="entry name" value="Aconitase_4Fe-4S_BS"/>
</dbReference>
<dbReference type="InterPro" id="IPR036008">
    <property type="entry name" value="Aconitase_4Fe-4S_dom"/>
</dbReference>
<dbReference type="InterPro" id="IPR050067">
    <property type="entry name" value="IPM_dehydratase_rel_enz"/>
</dbReference>
<dbReference type="InterPro" id="IPR033941">
    <property type="entry name" value="IPMI_cat"/>
</dbReference>
<dbReference type="NCBIfam" id="TIGR00170">
    <property type="entry name" value="leuC"/>
    <property type="match status" value="1"/>
</dbReference>
<dbReference type="NCBIfam" id="NF004016">
    <property type="entry name" value="PRK05478.1"/>
    <property type="match status" value="1"/>
</dbReference>
<dbReference type="NCBIfam" id="NF009116">
    <property type="entry name" value="PRK12466.1"/>
    <property type="match status" value="1"/>
</dbReference>
<dbReference type="PANTHER" id="PTHR43822:SF9">
    <property type="entry name" value="3-ISOPROPYLMALATE DEHYDRATASE"/>
    <property type="match status" value="1"/>
</dbReference>
<dbReference type="PANTHER" id="PTHR43822">
    <property type="entry name" value="HOMOACONITASE, MITOCHONDRIAL-RELATED"/>
    <property type="match status" value="1"/>
</dbReference>
<dbReference type="Pfam" id="PF00330">
    <property type="entry name" value="Aconitase"/>
    <property type="match status" value="1"/>
</dbReference>
<dbReference type="PRINTS" id="PR00415">
    <property type="entry name" value="ACONITASE"/>
</dbReference>
<dbReference type="SUPFAM" id="SSF53732">
    <property type="entry name" value="Aconitase iron-sulfur domain"/>
    <property type="match status" value="1"/>
</dbReference>
<dbReference type="PROSITE" id="PS00450">
    <property type="entry name" value="ACONITASE_1"/>
    <property type="match status" value="1"/>
</dbReference>
<dbReference type="PROSITE" id="PS01244">
    <property type="entry name" value="ACONITASE_2"/>
    <property type="match status" value="1"/>
</dbReference>
<evidence type="ECO:0000255" key="1">
    <source>
        <dbReference type="HAMAP-Rule" id="MF_01026"/>
    </source>
</evidence>
<proteinExistence type="inferred from homology"/>
<name>LEUC_ACIF2</name>